<gene>
    <name type="primary">PATL3</name>
    <name type="ordered locus">At1g72160</name>
    <name type="ORF">T9N14.8</name>
</gene>
<proteinExistence type="evidence at protein level"/>
<reference key="1">
    <citation type="journal article" date="2000" name="Nature">
        <title>Sequence and analysis of chromosome 1 of the plant Arabidopsis thaliana.</title>
        <authorList>
            <person name="Theologis A."/>
            <person name="Ecker J.R."/>
            <person name="Palm C.J."/>
            <person name="Federspiel N.A."/>
            <person name="Kaul S."/>
            <person name="White O."/>
            <person name="Alonso J."/>
            <person name="Altafi H."/>
            <person name="Araujo R."/>
            <person name="Bowman C.L."/>
            <person name="Brooks S.Y."/>
            <person name="Buehler E."/>
            <person name="Chan A."/>
            <person name="Chao Q."/>
            <person name="Chen H."/>
            <person name="Cheuk R.F."/>
            <person name="Chin C.W."/>
            <person name="Chung M.K."/>
            <person name="Conn L."/>
            <person name="Conway A.B."/>
            <person name="Conway A.R."/>
            <person name="Creasy T.H."/>
            <person name="Dewar K."/>
            <person name="Dunn P."/>
            <person name="Etgu P."/>
            <person name="Feldblyum T.V."/>
            <person name="Feng J.-D."/>
            <person name="Fong B."/>
            <person name="Fujii C.Y."/>
            <person name="Gill J.E."/>
            <person name="Goldsmith A.D."/>
            <person name="Haas B."/>
            <person name="Hansen N.F."/>
            <person name="Hughes B."/>
            <person name="Huizar L."/>
            <person name="Hunter J.L."/>
            <person name="Jenkins J."/>
            <person name="Johnson-Hopson C."/>
            <person name="Khan S."/>
            <person name="Khaykin E."/>
            <person name="Kim C.J."/>
            <person name="Koo H.L."/>
            <person name="Kremenetskaia I."/>
            <person name="Kurtz D.B."/>
            <person name="Kwan A."/>
            <person name="Lam B."/>
            <person name="Langin-Hooper S."/>
            <person name="Lee A."/>
            <person name="Lee J.M."/>
            <person name="Lenz C.A."/>
            <person name="Li J.H."/>
            <person name="Li Y.-P."/>
            <person name="Lin X."/>
            <person name="Liu S.X."/>
            <person name="Liu Z.A."/>
            <person name="Luros J.S."/>
            <person name="Maiti R."/>
            <person name="Marziali A."/>
            <person name="Militscher J."/>
            <person name="Miranda M."/>
            <person name="Nguyen M."/>
            <person name="Nierman W.C."/>
            <person name="Osborne B.I."/>
            <person name="Pai G."/>
            <person name="Peterson J."/>
            <person name="Pham P.K."/>
            <person name="Rizzo M."/>
            <person name="Rooney T."/>
            <person name="Rowley D."/>
            <person name="Sakano H."/>
            <person name="Salzberg S.L."/>
            <person name="Schwartz J.R."/>
            <person name="Shinn P."/>
            <person name="Southwick A.M."/>
            <person name="Sun H."/>
            <person name="Tallon L.J."/>
            <person name="Tambunga G."/>
            <person name="Toriumi M.J."/>
            <person name="Town C.D."/>
            <person name="Utterback T."/>
            <person name="Van Aken S."/>
            <person name="Vaysberg M."/>
            <person name="Vysotskaia V.S."/>
            <person name="Walker M."/>
            <person name="Wu D."/>
            <person name="Yu G."/>
            <person name="Fraser C.M."/>
            <person name="Venter J.C."/>
            <person name="Davis R.W."/>
        </authorList>
    </citation>
    <scope>NUCLEOTIDE SEQUENCE [LARGE SCALE GENOMIC DNA]</scope>
    <source>
        <strain>cv. Columbia</strain>
    </source>
</reference>
<reference key="2">
    <citation type="journal article" date="2017" name="Plant J.">
        <title>Araport11: a complete reannotation of the Arabidopsis thaliana reference genome.</title>
        <authorList>
            <person name="Cheng C.Y."/>
            <person name="Krishnakumar V."/>
            <person name="Chan A.P."/>
            <person name="Thibaud-Nissen F."/>
            <person name="Schobel S."/>
            <person name="Town C.D."/>
        </authorList>
    </citation>
    <scope>GENOME REANNOTATION</scope>
    <source>
        <strain>cv. Columbia</strain>
    </source>
</reference>
<reference key="3">
    <citation type="journal article" date="2003" name="Science">
        <title>Empirical analysis of transcriptional activity in the Arabidopsis genome.</title>
        <authorList>
            <person name="Yamada K."/>
            <person name="Lim J."/>
            <person name="Dale J.M."/>
            <person name="Chen H."/>
            <person name="Shinn P."/>
            <person name="Palm C.J."/>
            <person name="Southwick A.M."/>
            <person name="Wu H.C."/>
            <person name="Kim C.J."/>
            <person name="Nguyen M."/>
            <person name="Pham P.K."/>
            <person name="Cheuk R.F."/>
            <person name="Karlin-Newmann G."/>
            <person name="Liu S.X."/>
            <person name="Lam B."/>
            <person name="Sakano H."/>
            <person name="Wu T."/>
            <person name="Yu G."/>
            <person name="Miranda M."/>
            <person name="Quach H.L."/>
            <person name="Tripp M."/>
            <person name="Chang C.H."/>
            <person name="Lee J.M."/>
            <person name="Toriumi M.J."/>
            <person name="Chan M.M."/>
            <person name="Tang C.C."/>
            <person name="Onodera C.S."/>
            <person name="Deng J.M."/>
            <person name="Akiyama K."/>
            <person name="Ansari Y."/>
            <person name="Arakawa T."/>
            <person name="Banh J."/>
            <person name="Banno F."/>
            <person name="Bowser L."/>
            <person name="Brooks S.Y."/>
            <person name="Carninci P."/>
            <person name="Chao Q."/>
            <person name="Choy N."/>
            <person name="Enju A."/>
            <person name="Goldsmith A.D."/>
            <person name="Gurjal M."/>
            <person name="Hansen N.F."/>
            <person name="Hayashizaki Y."/>
            <person name="Johnson-Hopson C."/>
            <person name="Hsuan V.W."/>
            <person name="Iida K."/>
            <person name="Karnes M."/>
            <person name="Khan S."/>
            <person name="Koesema E."/>
            <person name="Ishida J."/>
            <person name="Jiang P.X."/>
            <person name="Jones T."/>
            <person name="Kawai J."/>
            <person name="Kamiya A."/>
            <person name="Meyers C."/>
            <person name="Nakajima M."/>
            <person name="Narusaka M."/>
            <person name="Seki M."/>
            <person name="Sakurai T."/>
            <person name="Satou M."/>
            <person name="Tamse R."/>
            <person name="Vaysberg M."/>
            <person name="Wallender E.K."/>
            <person name="Wong C."/>
            <person name="Yamamura Y."/>
            <person name="Yuan S."/>
            <person name="Shinozaki K."/>
            <person name="Davis R.W."/>
            <person name="Theologis A."/>
            <person name="Ecker J.R."/>
        </authorList>
    </citation>
    <scope>NUCLEOTIDE SEQUENCE [LARGE SCALE MRNA]</scope>
    <source>
        <strain>cv. Columbia</strain>
    </source>
</reference>
<reference key="4">
    <citation type="submission" date="2005-03" db="EMBL/GenBank/DDBJ databases">
        <title>Large-scale analysis of RIKEN Arabidopsis full-length (RAFL) cDNAs.</title>
        <authorList>
            <person name="Totoki Y."/>
            <person name="Seki M."/>
            <person name="Ishida J."/>
            <person name="Nakajima M."/>
            <person name="Enju A."/>
            <person name="Kamiya A."/>
            <person name="Narusaka M."/>
            <person name="Shin-i T."/>
            <person name="Nakagawa M."/>
            <person name="Sakamoto N."/>
            <person name="Oishi K."/>
            <person name="Kohara Y."/>
            <person name="Kobayashi M."/>
            <person name="Toyoda A."/>
            <person name="Sakaki Y."/>
            <person name="Sakurai T."/>
            <person name="Iida K."/>
            <person name="Akiyama K."/>
            <person name="Satou M."/>
            <person name="Toyoda T."/>
            <person name="Konagaya A."/>
            <person name="Carninci P."/>
            <person name="Kawai J."/>
            <person name="Hayashizaki Y."/>
            <person name="Shinozaki K."/>
        </authorList>
    </citation>
    <scope>NUCLEOTIDE SEQUENCE [LARGE SCALE MRNA] OF 380-490</scope>
    <source>
        <strain>cv. Columbia</strain>
    </source>
</reference>
<reference key="5">
    <citation type="journal article" date="2004" name="Plant Physiol.">
        <title>Patellin1, a novel Sec14-like protein, localizes to the cell plate and binds phosphoinositides.</title>
        <authorList>
            <person name="Peterman T.K."/>
            <person name="Ohol Y.M."/>
            <person name="McReynolds L.J."/>
            <person name="Luna E.J."/>
        </authorList>
    </citation>
    <scope>GENE FAMILY</scope>
    <scope>NOMENCLATURE</scope>
</reference>
<reference key="6">
    <citation type="journal article" date="2009" name="J. Proteomics">
        <title>Phosphoproteomic analysis of nuclei-enriched fractions from Arabidopsis thaliana.</title>
        <authorList>
            <person name="Jones A.M.E."/>
            <person name="MacLean D."/>
            <person name="Studholme D.J."/>
            <person name="Serna-Sanz A."/>
            <person name="Andreasson E."/>
            <person name="Rathjen J.P."/>
            <person name="Peck S.C."/>
        </authorList>
    </citation>
    <scope>PHOSPHORYLATION [LARGE SCALE ANALYSIS] AT SER-108</scope>
    <scope>IDENTIFICATION BY MASS SPECTROMETRY [LARGE SCALE ANALYSIS]</scope>
    <source>
        <strain>cv. Columbia</strain>
    </source>
</reference>
<reference key="7">
    <citation type="journal article" date="2009" name="Plant Physiol.">
        <title>Large-scale Arabidopsis phosphoproteome profiling reveals novel chloroplast kinase substrates and phosphorylation networks.</title>
        <authorList>
            <person name="Reiland S."/>
            <person name="Messerli G."/>
            <person name="Baerenfaller K."/>
            <person name="Gerrits B."/>
            <person name="Endler A."/>
            <person name="Grossmann J."/>
            <person name="Gruissem W."/>
            <person name="Baginsky S."/>
        </authorList>
    </citation>
    <scope>PHOSPHORYLATION [LARGE SCALE ANALYSIS] AT SER-108</scope>
    <scope>IDENTIFICATION BY MASS SPECTROMETRY [LARGE SCALE ANALYSIS]</scope>
</reference>
<reference key="8">
    <citation type="journal article" date="2012" name="Mol. Cell. Proteomics">
        <title>Comparative large-scale characterisation of plant vs. mammal proteins reveals similar and idiosyncratic N-alpha acetylation features.</title>
        <authorList>
            <person name="Bienvenut W.V."/>
            <person name="Sumpton D."/>
            <person name="Martinez A."/>
            <person name="Lilla S."/>
            <person name="Espagne C."/>
            <person name="Meinnel T."/>
            <person name="Giglione C."/>
        </authorList>
    </citation>
    <scope>ACETYLATION [LARGE SCALE ANALYSIS] AT ALA-2</scope>
    <scope>CLEAVAGE OF INITIATOR METHIONINE [LARGE SCALE ANALYSIS]</scope>
    <scope>IDENTIFICATION BY MASS SPECTROMETRY [LARGE SCALE ANALYSIS]</scope>
</reference>
<feature type="initiator methionine" description="Removed" evidence="9">
    <location>
        <position position="1"/>
    </location>
</feature>
<feature type="chain" id="PRO_0000215587" description="Patellin-3">
    <location>
        <begin position="2"/>
        <end position="490"/>
    </location>
</feature>
<feature type="domain" description="CRAL-TRIO" evidence="3">
    <location>
        <begin position="202"/>
        <end position="377"/>
    </location>
</feature>
<feature type="domain" description="GOLD" evidence="4">
    <location>
        <begin position="353"/>
        <end position="487"/>
    </location>
</feature>
<feature type="region of interest" description="Disordered" evidence="5">
    <location>
        <begin position="1"/>
        <end position="121"/>
    </location>
</feature>
<feature type="compositionally biased region" description="Low complexity" evidence="5">
    <location>
        <begin position="1"/>
        <end position="17"/>
    </location>
</feature>
<feature type="compositionally biased region" description="Polar residues" evidence="5">
    <location>
        <begin position="19"/>
        <end position="33"/>
    </location>
</feature>
<feature type="compositionally biased region" description="Low complexity" evidence="5">
    <location>
        <begin position="46"/>
        <end position="56"/>
    </location>
</feature>
<feature type="compositionally biased region" description="Basic and acidic residues" evidence="5">
    <location>
        <begin position="57"/>
        <end position="69"/>
    </location>
</feature>
<feature type="compositionally biased region" description="Basic and acidic residues" evidence="5">
    <location>
        <begin position="79"/>
        <end position="100"/>
    </location>
</feature>
<feature type="compositionally biased region" description="Basic and acidic residues" evidence="5">
    <location>
        <begin position="109"/>
        <end position="121"/>
    </location>
</feature>
<feature type="modified residue" description="N-acetylalanine" evidence="9">
    <location>
        <position position="2"/>
    </location>
</feature>
<feature type="modified residue" description="Phosphoserine" evidence="7 8">
    <location>
        <position position="108"/>
    </location>
</feature>
<feature type="cross-link" description="Glycyl lysine isopeptide (Lys-Gly) (interchain with G-Cter in ubiquitin)" evidence="2">
    <location>
        <position position="193"/>
    </location>
</feature>
<feature type="sequence conflict" description="In Ref. 3; AAK82462." evidence="6" ref="3">
    <original>M</original>
    <variation>K</variation>
    <location>
        <position position="1"/>
    </location>
</feature>
<dbReference type="EMBL" id="AC067754">
    <property type="protein sequence ID" value="AAG51796.1"/>
    <property type="molecule type" value="Genomic_DNA"/>
</dbReference>
<dbReference type="EMBL" id="CP002684">
    <property type="protein sequence ID" value="AEE35283.1"/>
    <property type="molecule type" value="Genomic_DNA"/>
</dbReference>
<dbReference type="EMBL" id="AY048199">
    <property type="protein sequence ID" value="AAK82462.1"/>
    <property type="status" value="ALT_INIT"/>
    <property type="molecule type" value="mRNA"/>
</dbReference>
<dbReference type="EMBL" id="AY133553">
    <property type="protein sequence ID" value="AAM91383.1"/>
    <property type="molecule type" value="mRNA"/>
</dbReference>
<dbReference type="EMBL" id="AK221110">
    <property type="protein sequence ID" value="BAD95021.1"/>
    <property type="molecule type" value="mRNA"/>
</dbReference>
<dbReference type="PIR" id="A96745">
    <property type="entry name" value="A96745"/>
</dbReference>
<dbReference type="RefSeq" id="NP_177361.1">
    <property type="nucleotide sequence ID" value="NM_105874.4"/>
</dbReference>
<dbReference type="SMR" id="Q56Z59"/>
<dbReference type="BioGRID" id="28767">
    <property type="interactions" value="6"/>
</dbReference>
<dbReference type="FunCoup" id="Q56Z59">
    <property type="interactions" value="636"/>
</dbReference>
<dbReference type="IntAct" id="Q56Z59">
    <property type="interactions" value="1"/>
</dbReference>
<dbReference type="STRING" id="3702.Q56Z59"/>
<dbReference type="iPTMnet" id="Q56Z59"/>
<dbReference type="PaxDb" id="3702-AT1G72160.1"/>
<dbReference type="ProteomicsDB" id="226055"/>
<dbReference type="EnsemblPlants" id="AT1G72160.1">
    <property type="protein sequence ID" value="AT1G72160.1"/>
    <property type="gene ID" value="AT1G72160"/>
</dbReference>
<dbReference type="GeneID" id="843547"/>
<dbReference type="Gramene" id="AT1G72160.1">
    <property type="protein sequence ID" value="AT1G72160.1"/>
    <property type="gene ID" value="AT1G72160"/>
</dbReference>
<dbReference type="KEGG" id="ath:AT1G72160"/>
<dbReference type="Araport" id="AT1G72160"/>
<dbReference type="TAIR" id="AT1G72160">
    <property type="gene designation" value="PATL3"/>
</dbReference>
<dbReference type="eggNOG" id="KOG1471">
    <property type="taxonomic scope" value="Eukaryota"/>
</dbReference>
<dbReference type="HOGENOM" id="CLU_023762_1_0_1"/>
<dbReference type="InParanoid" id="Q56Z59"/>
<dbReference type="OMA" id="MFSTIWS"/>
<dbReference type="PhylomeDB" id="Q56Z59"/>
<dbReference type="PRO" id="PR:Q56Z59"/>
<dbReference type="Proteomes" id="UP000006548">
    <property type="component" value="Chromosome 1"/>
</dbReference>
<dbReference type="ExpressionAtlas" id="Q56Z59">
    <property type="expression patterns" value="baseline and differential"/>
</dbReference>
<dbReference type="GO" id="GO:0005737">
    <property type="term" value="C:cytoplasm"/>
    <property type="evidence" value="ECO:0007669"/>
    <property type="project" value="UniProtKB-SubCell"/>
</dbReference>
<dbReference type="GO" id="GO:0005886">
    <property type="term" value="C:plasma membrane"/>
    <property type="evidence" value="ECO:0007005"/>
    <property type="project" value="TAIR"/>
</dbReference>
<dbReference type="GO" id="GO:0008289">
    <property type="term" value="F:lipid binding"/>
    <property type="evidence" value="ECO:0007669"/>
    <property type="project" value="UniProtKB-KW"/>
</dbReference>
<dbReference type="GO" id="GO:0051301">
    <property type="term" value="P:cell division"/>
    <property type="evidence" value="ECO:0007669"/>
    <property type="project" value="UniProtKB-KW"/>
</dbReference>
<dbReference type="CDD" id="cd00170">
    <property type="entry name" value="SEC14"/>
    <property type="match status" value="1"/>
</dbReference>
<dbReference type="FunFam" id="2.60.120.680:FF:000008">
    <property type="entry name" value="PATELLIN 2"/>
    <property type="match status" value="1"/>
</dbReference>
<dbReference type="FunFam" id="3.40.525.10:FF:000025">
    <property type="entry name" value="PATELLIN 2"/>
    <property type="match status" value="1"/>
</dbReference>
<dbReference type="Gene3D" id="3.40.525.10">
    <property type="entry name" value="CRAL-TRIO lipid binding domain"/>
    <property type="match status" value="1"/>
</dbReference>
<dbReference type="Gene3D" id="2.60.120.680">
    <property type="entry name" value="GOLD domain"/>
    <property type="match status" value="1"/>
</dbReference>
<dbReference type="InterPro" id="IPR001251">
    <property type="entry name" value="CRAL-TRIO_dom"/>
</dbReference>
<dbReference type="InterPro" id="IPR036865">
    <property type="entry name" value="CRAL-TRIO_dom_sf"/>
</dbReference>
<dbReference type="InterPro" id="IPR011074">
    <property type="entry name" value="CRAL/TRIO_N_dom"/>
</dbReference>
<dbReference type="InterPro" id="IPR036273">
    <property type="entry name" value="CRAL/TRIO_N_dom_sf"/>
</dbReference>
<dbReference type="InterPro" id="IPR009038">
    <property type="entry name" value="GOLD_dom"/>
</dbReference>
<dbReference type="InterPro" id="IPR036598">
    <property type="entry name" value="GOLD_dom_sf"/>
</dbReference>
<dbReference type="InterPro" id="IPR044834">
    <property type="entry name" value="PATL"/>
</dbReference>
<dbReference type="InterPro" id="IPR056794">
    <property type="entry name" value="PATL1-6_C_GOLD"/>
</dbReference>
<dbReference type="PANTHER" id="PTHR45932">
    <property type="entry name" value="PATELLIN-1"/>
    <property type="match status" value="1"/>
</dbReference>
<dbReference type="PANTHER" id="PTHR45932:SF6">
    <property type="entry name" value="PATELLIN-3"/>
    <property type="match status" value="1"/>
</dbReference>
<dbReference type="Pfam" id="PF00650">
    <property type="entry name" value="CRAL_TRIO"/>
    <property type="match status" value="1"/>
</dbReference>
<dbReference type="Pfam" id="PF03765">
    <property type="entry name" value="CRAL_TRIO_N"/>
    <property type="match status" value="1"/>
</dbReference>
<dbReference type="Pfam" id="PF25099">
    <property type="entry name" value="GOLD_PATL1_C"/>
    <property type="match status" value="1"/>
</dbReference>
<dbReference type="SMART" id="SM01100">
    <property type="entry name" value="CRAL_TRIO_N"/>
    <property type="match status" value="1"/>
</dbReference>
<dbReference type="SMART" id="SM00516">
    <property type="entry name" value="SEC14"/>
    <property type="match status" value="1"/>
</dbReference>
<dbReference type="SUPFAM" id="SSF52087">
    <property type="entry name" value="CRAL/TRIO domain"/>
    <property type="match status" value="1"/>
</dbReference>
<dbReference type="SUPFAM" id="SSF46938">
    <property type="entry name" value="CRAL/TRIO N-terminal domain"/>
    <property type="match status" value="1"/>
</dbReference>
<dbReference type="SUPFAM" id="SSF101576">
    <property type="entry name" value="Supernatant protein factor (SPF), C-terminal domain"/>
    <property type="match status" value="1"/>
</dbReference>
<dbReference type="PROSITE" id="PS50191">
    <property type="entry name" value="CRAL_TRIO"/>
    <property type="match status" value="1"/>
</dbReference>
<dbReference type="PROSITE" id="PS50866">
    <property type="entry name" value="GOLD"/>
    <property type="match status" value="1"/>
</dbReference>
<protein>
    <recommendedName>
        <fullName>Patellin-3</fullName>
    </recommendedName>
</protein>
<organism>
    <name type="scientific">Arabidopsis thaliana</name>
    <name type="common">Mouse-ear cress</name>
    <dbReference type="NCBI Taxonomy" id="3702"/>
    <lineage>
        <taxon>Eukaryota</taxon>
        <taxon>Viridiplantae</taxon>
        <taxon>Streptophyta</taxon>
        <taxon>Embryophyta</taxon>
        <taxon>Tracheophyta</taxon>
        <taxon>Spermatophyta</taxon>
        <taxon>Magnoliopsida</taxon>
        <taxon>eudicotyledons</taxon>
        <taxon>Gunneridae</taxon>
        <taxon>Pentapetalae</taxon>
        <taxon>rosids</taxon>
        <taxon>malvids</taxon>
        <taxon>Brassicales</taxon>
        <taxon>Brassicaceae</taxon>
        <taxon>Camelineae</taxon>
        <taxon>Arabidopsis</taxon>
    </lineage>
</organism>
<keyword id="KW-0007">Acetylation</keyword>
<keyword id="KW-0131">Cell cycle</keyword>
<keyword id="KW-0132">Cell division</keyword>
<keyword id="KW-0963">Cytoplasm</keyword>
<keyword id="KW-1017">Isopeptide bond</keyword>
<keyword id="KW-0446">Lipid-binding</keyword>
<keyword id="KW-0472">Membrane</keyword>
<keyword id="KW-0597">Phosphoprotein</keyword>
<keyword id="KW-1185">Reference proteome</keyword>
<keyword id="KW-0813">Transport</keyword>
<keyword id="KW-0832">Ubl conjugation</keyword>
<comment type="function">
    <text evidence="1">Carrier protein that may be involved in membrane-trafficking events associated with cell plate formation during cytokinesis. Binds to some hydrophobic molecules such as phosphoinositides and promotes their transfer between the different cellular sites (By similarity).</text>
</comment>
<comment type="subcellular location">
    <subcellularLocation>
        <location evidence="1">Membrane</location>
        <topology evidence="1">Peripheral membrane protein</topology>
    </subcellularLocation>
    <subcellularLocation>
        <location evidence="1">Cytoplasm</location>
    </subcellularLocation>
    <text evidence="1">Mainly membrane-associated. Also cytoplasmic (By similarity).</text>
</comment>
<comment type="miscellaneous">
    <text>'Patella' means 'small plate' in Latin.</text>
</comment>
<comment type="similarity">
    <text evidence="6">Belongs to the patellin family.</text>
</comment>
<comment type="sequence caution" evidence="6">
    <conflict type="erroneous initiation">
        <sequence resource="EMBL-CDS" id="AAK82462"/>
    </conflict>
</comment>
<name>PATL3_ARATH</name>
<accession>Q56Z59</accession>
<accession>Q94AG3</accession>
<accession>Q9C7T9</accession>
<evidence type="ECO:0000250" key="1"/>
<evidence type="ECO:0000250" key="2">
    <source>
        <dbReference type="UniProtKB" id="Q56WK6"/>
    </source>
</evidence>
<evidence type="ECO:0000255" key="3">
    <source>
        <dbReference type="PROSITE-ProRule" id="PRU00056"/>
    </source>
</evidence>
<evidence type="ECO:0000255" key="4">
    <source>
        <dbReference type="PROSITE-ProRule" id="PRU00096"/>
    </source>
</evidence>
<evidence type="ECO:0000256" key="5">
    <source>
        <dbReference type="SAM" id="MobiDB-lite"/>
    </source>
</evidence>
<evidence type="ECO:0000305" key="6"/>
<evidence type="ECO:0007744" key="7">
    <source>
    </source>
</evidence>
<evidence type="ECO:0007744" key="8">
    <source>
    </source>
</evidence>
<evidence type="ECO:0007744" key="9">
    <source>
    </source>
</evidence>
<sequence>MAEEPTTTTLVTPEKLPSPSLTPSEVSESTQDALPTETETLEKVTETNPPETADTTTKPEEETAAEHHPPTVTETETASTEKQEVKDEASQKEVAEEKKSMIPQNLGSFKEESSKLSDLSNSEKKSLDELKHLVREALDNHQFTNTPEEVKIWGIPLLEDDRSDVVLLKFLRAREFKVKDSFAMLKNTIKWRKEFKIDELVEEDLVDDLDKVVFMHGHDREGHPVCYNVYGEFQNKELYNKTFSDEEKRKHFLRTRIQFLERSIRKLDFSSGGVSTIFQVNDMKNSPGLGKKELRSATKQAVELLQDNYPEFVFKQAFINVPWWYLVFYTVIGPFMTPRSKSKLVFAGPSRSAETLFKYISPEQVPVQYGGLSVDPCDCNPDFSLEDSASEITVKPGTKQTVEIIIYEKCELVWEIRVTGWEVSYKAEFVPEEKDAYTVVIQKPRKMRPSDEPVLTHSFKVNELGKVLLTVDNPTSKKKKLVYRFNVKPL</sequence>